<feature type="chain" id="PRO_1000064250" description="Protein TsgA homolog">
    <location>
        <begin position="1"/>
        <end position="394"/>
    </location>
</feature>
<feature type="transmembrane region" description="Helical" evidence="1">
    <location>
        <begin position="11"/>
        <end position="31"/>
    </location>
</feature>
<feature type="transmembrane region" description="Helical" evidence="1">
    <location>
        <begin position="51"/>
        <end position="71"/>
    </location>
</feature>
<feature type="transmembrane region" description="Helical" evidence="1">
    <location>
        <begin position="78"/>
        <end position="98"/>
    </location>
</feature>
<feature type="transmembrane region" description="Helical" evidence="1">
    <location>
        <begin position="101"/>
        <end position="121"/>
    </location>
</feature>
<feature type="transmembrane region" description="Helical" evidence="1">
    <location>
        <begin position="134"/>
        <end position="154"/>
    </location>
</feature>
<feature type="transmembrane region" description="Helical" evidence="1">
    <location>
        <begin position="162"/>
        <end position="182"/>
    </location>
</feature>
<feature type="transmembrane region" description="Helical" evidence="1">
    <location>
        <begin position="206"/>
        <end position="226"/>
    </location>
</feature>
<feature type="transmembrane region" description="Helical" evidence="1">
    <location>
        <begin position="250"/>
        <end position="270"/>
    </location>
</feature>
<feature type="transmembrane region" description="Helical" evidence="1">
    <location>
        <begin position="273"/>
        <end position="293"/>
    </location>
</feature>
<feature type="transmembrane region" description="Helical" evidence="1">
    <location>
        <begin position="297"/>
        <end position="317"/>
    </location>
</feature>
<feature type="transmembrane region" description="Helical" evidence="1">
    <location>
        <begin position="332"/>
        <end position="352"/>
    </location>
</feature>
<feature type="transmembrane region" description="Helical" evidence="1">
    <location>
        <begin position="361"/>
        <end position="381"/>
    </location>
</feature>
<evidence type="ECO:0000255" key="1">
    <source>
        <dbReference type="HAMAP-Rule" id="MF_01044"/>
    </source>
</evidence>
<comment type="subcellular location">
    <subcellularLocation>
        <location evidence="1">Cell inner membrane</location>
        <topology evidence="1">Multi-pass membrane protein</topology>
    </subcellularLocation>
</comment>
<comment type="similarity">
    <text evidence="1">Belongs to the major facilitator superfamily. TsgA family.</text>
</comment>
<proteinExistence type="inferred from homology"/>
<gene>
    <name evidence="1" type="primary">tsgA</name>
    <name type="ordered locus">Ent638_3791</name>
</gene>
<reference key="1">
    <citation type="journal article" date="2010" name="PLoS Genet.">
        <title>Genome sequence of the plant growth promoting endophytic bacterium Enterobacter sp. 638.</title>
        <authorList>
            <person name="Taghavi S."/>
            <person name="van der Lelie D."/>
            <person name="Hoffman A."/>
            <person name="Zhang Y.B."/>
            <person name="Walla M.D."/>
            <person name="Vangronsveld J."/>
            <person name="Newman L."/>
            <person name="Monchy S."/>
        </authorList>
    </citation>
    <scope>NUCLEOTIDE SEQUENCE [LARGE SCALE GENOMIC DNA]</scope>
    <source>
        <strain>638</strain>
    </source>
</reference>
<sequence>MTNSNRIKLTWISFFSYALTGALVIVTGMVMGDIANYFQLPVSSMSNTFTFLNAGILISIFLNAWLMEIVPLKTQLRFGFVLMVAAVAGLMVSHSIALFSVSMFVLGLVSGITMSIGTFLITHMYEGRQRGARLLFTDSFFSMAGMIFPMVAAVLLARSIEWYWVYACIGLVYVAIFVLTFGCEFPVLGKKAEQSTQPVAKEKWGIGVLFLSVAALCYILGQLGFISWVPEYAKGLGMSLNDAGKLVSDFWMSYMFGMWAFSFILRFFDLQRILTVLAGLATVLMYLFINGAPEHMAWFILTLGFFSSAIYTSIITLGSLQTKVASPKLVNFVLTCGTIGTMLTFVVTGPIVAHSGPLAALQTANGLYAVVFVMCLILGFVTRHRQHNTVAASH</sequence>
<name>TSGA_ENT38</name>
<accession>A4WFG6</accession>
<organism>
    <name type="scientific">Enterobacter sp. (strain 638)</name>
    <dbReference type="NCBI Taxonomy" id="399742"/>
    <lineage>
        <taxon>Bacteria</taxon>
        <taxon>Pseudomonadati</taxon>
        <taxon>Pseudomonadota</taxon>
        <taxon>Gammaproteobacteria</taxon>
        <taxon>Enterobacterales</taxon>
        <taxon>Enterobacteriaceae</taxon>
        <taxon>Enterobacter</taxon>
    </lineage>
</organism>
<keyword id="KW-0997">Cell inner membrane</keyword>
<keyword id="KW-1003">Cell membrane</keyword>
<keyword id="KW-0472">Membrane</keyword>
<keyword id="KW-0812">Transmembrane</keyword>
<keyword id="KW-1133">Transmembrane helix</keyword>
<dbReference type="EMBL" id="CP000653">
    <property type="protein sequence ID" value="ABP62446.1"/>
    <property type="molecule type" value="Genomic_DNA"/>
</dbReference>
<dbReference type="RefSeq" id="WP_015960752.1">
    <property type="nucleotide sequence ID" value="NC_009436.1"/>
</dbReference>
<dbReference type="SMR" id="A4WFG6"/>
<dbReference type="STRING" id="399742.Ent638_3791"/>
<dbReference type="KEGG" id="ent:Ent638_3791"/>
<dbReference type="eggNOG" id="COG0738">
    <property type="taxonomic scope" value="Bacteria"/>
</dbReference>
<dbReference type="HOGENOM" id="CLU_056916_0_0_6"/>
<dbReference type="OrthoDB" id="8577032at2"/>
<dbReference type="Proteomes" id="UP000000230">
    <property type="component" value="Chromosome"/>
</dbReference>
<dbReference type="GO" id="GO:0005886">
    <property type="term" value="C:plasma membrane"/>
    <property type="evidence" value="ECO:0007669"/>
    <property type="project" value="UniProtKB-SubCell"/>
</dbReference>
<dbReference type="GO" id="GO:0022857">
    <property type="term" value="F:transmembrane transporter activity"/>
    <property type="evidence" value="ECO:0007669"/>
    <property type="project" value="InterPro"/>
</dbReference>
<dbReference type="Gene3D" id="1.20.1250.20">
    <property type="entry name" value="MFS general substrate transporter like domains"/>
    <property type="match status" value="2"/>
</dbReference>
<dbReference type="HAMAP" id="MF_01044">
    <property type="entry name" value="MFS_TsgA"/>
    <property type="match status" value="1"/>
</dbReference>
<dbReference type="InterPro" id="IPR011701">
    <property type="entry name" value="MFS"/>
</dbReference>
<dbReference type="InterPro" id="IPR020846">
    <property type="entry name" value="MFS_dom"/>
</dbReference>
<dbReference type="InterPro" id="IPR036259">
    <property type="entry name" value="MFS_trans_sf"/>
</dbReference>
<dbReference type="InterPro" id="IPR023528">
    <property type="entry name" value="MFS_TsgA"/>
</dbReference>
<dbReference type="InterPro" id="IPR050375">
    <property type="entry name" value="MFS_TsgA-like"/>
</dbReference>
<dbReference type="NCBIfam" id="NF002982">
    <property type="entry name" value="PRK03699.1"/>
    <property type="match status" value="1"/>
</dbReference>
<dbReference type="PANTHER" id="PTHR43702">
    <property type="entry name" value="L-FUCOSE-PROTON SYMPORTER"/>
    <property type="match status" value="1"/>
</dbReference>
<dbReference type="PANTHER" id="PTHR43702:SF3">
    <property type="entry name" value="PROTEIN TSGA"/>
    <property type="match status" value="1"/>
</dbReference>
<dbReference type="Pfam" id="PF07690">
    <property type="entry name" value="MFS_1"/>
    <property type="match status" value="1"/>
</dbReference>
<dbReference type="SUPFAM" id="SSF103473">
    <property type="entry name" value="MFS general substrate transporter"/>
    <property type="match status" value="1"/>
</dbReference>
<dbReference type="PROSITE" id="PS50850">
    <property type="entry name" value="MFS"/>
    <property type="match status" value="1"/>
</dbReference>
<protein>
    <recommendedName>
        <fullName evidence="1">Protein TsgA homolog</fullName>
    </recommendedName>
</protein>